<evidence type="ECO:0000255" key="1">
    <source>
        <dbReference type="HAMAP-Rule" id="MF_00045"/>
    </source>
</evidence>
<name>ORN_PSEP7</name>
<feature type="chain" id="PRO_1000004271" description="Oligoribonuclease">
    <location>
        <begin position="1"/>
        <end position="180"/>
    </location>
</feature>
<feature type="domain" description="Exonuclease" evidence="1">
    <location>
        <begin position="7"/>
        <end position="170"/>
    </location>
</feature>
<feature type="active site" evidence="1">
    <location>
        <position position="128"/>
    </location>
</feature>
<protein>
    <recommendedName>
        <fullName evidence="1">Oligoribonuclease</fullName>
        <ecNumber evidence="1">3.1.15.-</ecNumber>
    </recommendedName>
</protein>
<gene>
    <name evidence="1" type="primary">orn</name>
    <name type="ordered locus">PSPA7_5680</name>
</gene>
<sequence>MQNPQNLIWIDLEMTGLDPDRDVIIEMATIVTDSDLNTLAEGPVIAIHQPEEVLAGMDEWNTRQHGQSGLTQRVRESTVSMAEAEAQTLAFLEQWVPKRSSPICGNSICQDRRFLYRHMPRLEGYFHYRNLDVSTLKELAARWAPQVRESFKKGNTHLALDDIRESIAELRHYRDHFIKL</sequence>
<proteinExistence type="inferred from homology"/>
<organism>
    <name type="scientific">Pseudomonas paraeruginosa (strain DSM 24068 / PA7)</name>
    <name type="common">Pseudomonas aeruginosa (strain PA7)</name>
    <dbReference type="NCBI Taxonomy" id="381754"/>
    <lineage>
        <taxon>Bacteria</taxon>
        <taxon>Pseudomonadati</taxon>
        <taxon>Pseudomonadota</taxon>
        <taxon>Gammaproteobacteria</taxon>
        <taxon>Pseudomonadales</taxon>
        <taxon>Pseudomonadaceae</taxon>
        <taxon>Pseudomonas</taxon>
        <taxon>Pseudomonas paraeruginosa</taxon>
    </lineage>
</organism>
<comment type="function">
    <text evidence="1">3'-to-5' exoribonuclease specific for small oligoribonucleotides.</text>
</comment>
<comment type="subcellular location">
    <subcellularLocation>
        <location evidence="1">Cytoplasm</location>
    </subcellularLocation>
</comment>
<comment type="similarity">
    <text evidence="1">Belongs to the oligoribonuclease family.</text>
</comment>
<accession>A6VD64</accession>
<keyword id="KW-0963">Cytoplasm</keyword>
<keyword id="KW-0269">Exonuclease</keyword>
<keyword id="KW-0378">Hydrolase</keyword>
<keyword id="KW-0540">Nuclease</keyword>
<reference key="1">
    <citation type="submission" date="2007-06" db="EMBL/GenBank/DDBJ databases">
        <authorList>
            <person name="Dodson R.J."/>
            <person name="Harkins D."/>
            <person name="Paulsen I.T."/>
        </authorList>
    </citation>
    <scope>NUCLEOTIDE SEQUENCE [LARGE SCALE GENOMIC DNA]</scope>
    <source>
        <strain>DSM 24068 / PA7</strain>
    </source>
</reference>
<dbReference type="EC" id="3.1.15.-" evidence="1"/>
<dbReference type="EMBL" id="CP000744">
    <property type="protein sequence ID" value="ABR82780.1"/>
    <property type="molecule type" value="Genomic_DNA"/>
</dbReference>
<dbReference type="RefSeq" id="WP_003157127.1">
    <property type="nucleotide sequence ID" value="NC_009656.1"/>
</dbReference>
<dbReference type="SMR" id="A6VD64"/>
<dbReference type="GeneID" id="77223500"/>
<dbReference type="KEGG" id="pap:PSPA7_5680"/>
<dbReference type="HOGENOM" id="CLU_064761_2_0_6"/>
<dbReference type="Proteomes" id="UP000001582">
    <property type="component" value="Chromosome"/>
</dbReference>
<dbReference type="GO" id="GO:0005737">
    <property type="term" value="C:cytoplasm"/>
    <property type="evidence" value="ECO:0007669"/>
    <property type="project" value="UniProtKB-SubCell"/>
</dbReference>
<dbReference type="GO" id="GO:0000175">
    <property type="term" value="F:3'-5'-RNA exonuclease activity"/>
    <property type="evidence" value="ECO:0007669"/>
    <property type="project" value="InterPro"/>
</dbReference>
<dbReference type="GO" id="GO:0003676">
    <property type="term" value="F:nucleic acid binding"/>
    <property type="evidence" value="ECO:0007669"/>
    <property type="project" value="InterPro"/>
</dbReference>
<dbReference type="GO" id="GO:0006259">
    <property type="term" value="P:DNA metabolic process"/>
    <property type="evidence" value="ECO:0007669"/>
    <property type="project" value="UniProtKB-ARBA"/>
</dbReference>
<dbReference type="CDD" id="cd06135">
    <property type="entry name" value="Orn"/>
    <property type="match status" value="1"/>
</dbReference>
<dbReference type="FunFam" id="3.30.420.10:FF:000003">
    <property type="entry name" value="Oligoribonuclease"/>
    <property type="match status" value="1"/>
</dbReference>
<dbReference type="Gene3D" id="3.30.420.10">
    <property type="entry name" value="Ribonuclease H-like superfamily/Ribonuclease H"/>
    <property type="match status" value="1"/>
</dbReference>
<dbReference type="HAMAP" id="MF_00045">
    <property type="entry name" value="Oligoribonuclease"/>
    <property type="match status" value="1"/>
</dbReference>
<dbReference type="InterPro" id="IPR013520">
    <property type="entry name" value="Exonuclease_RNaseT/DNA_pol3"/>
</dbReference>
<dbReference type="InterPro" id="IPR022894">
    <property type="entry name" value="Oligoribonuclease"/>
</dbReference>
<dbReference type="InterPro" id="IPR012337">
    <property type="entry name" value="RNaseH-like_sf"/>
</dbReference>
<dbReference type="InterPro" id="IPR036397">
    <property type="entry name" value="RNaseH_sf"/>
</dbReference>
<dbReference type="NCBIfam" id="NF003765">
    <property type="entry name" value="PRK05359.1"/>
    <property type="match status" value="1"/>
</dbReference>
<dbReference type="PANTHER" id="PTHR11046">
    <property type="entry name" value="OLIGORIBONUCLEASE, MITOCHONDRIAL"/>
    <property type="match status" value="1"/>
</dbReference>
<dbReference type="PANTHER" id="PTHR11046:SF0">
    <property type="entry name" value="OLIGORIBONUCLEASE, MITOCHONDRIAL"/>
    <property type="match status" value="1"/>
</dbReference>
<dbReference type="Pfam" id="PF00929">
    <property type="entry name" value="RNase_T"/>
    <property type="match status" value="1"/>
</dbReference>
<dbReference type="SMART" id="SM00479">
    <property type="entry name" value="EXOIII"/>
    <property type="match status" value="1"/>
</dbReference>
<dbReference type="SUPFAM" id="SSF53098">
    <property type="entry name" value="Ribonuclease H-like"/>
    <property type="match status" value="1"/>
</dbReference>